<gene>
    <name evidence="1" type="primary">queA</name>
    <name type="ordered locus">E2348C_0340</name>
</gene>
<name>QUEA_ECO27</name>
<proteinExistence type="inferred from homology"/>
<comment type="function">
    <text evidence="1">Transfers and isomerizes the ribose moiety from AdoMet to the 7-aminomethyl group of 7-deazaguanine (preQ1-tRNA) to give epoxyqueuosine (oQ-tRNA).</text>
</comment>
<comment type="catalytic activity">
    <reaction evidence="1">
        <text>7-aminomethyl-7-carbaguanosine(34) in tRNA + S-adenosyl-L-methionine = epoxyqueuosine(34) in tRNA + adenine + L-methionine + 2 H(+)</text>
        <dbReference type="Rhea" id="RHEA:32155"/>
        <dbReference type="Rhea" id="RHEA-COMP:10342"/>
        <dbReference type="Rhea" id="RHEA-COMP:18582"/>
        <dbReference type="ChEBI" id="CHEBI:15378"/>
        <dbReference type="ChEBI" id="CHEBI:16708"/>
        <dbReference type="ChEBI" id="CHEBI:57844"/>
        <dbReference type="ChEBI" id="CHEBI:59789"/>
        <dbReference type="ChEBI" id="CHEBI:82833"/>
        <dbReference type="ChEBI" id="CHEBI:194443"/>
        <dbReference type="EC" id="2.4.99.17"/>
    </reaction>
</comment>
<comment type="pathway">
    <text evidence="1">tRNA modification; tRNA-queuosine biosynthesis.</text>
</comment>
<comment type="subunit">
    <text evidence="1">Monomer.</text>
</comment>
<comment type="subcellular location">
    <subcellularLocation>
        <location evidence="1">Cytoplasm</location>
    </subcellularLocation>
</comment>
<comment type="similarity">
    <text evidence="1">Belongs to the QueA family.</text>
</comment>
<sequence>MRVTDFSFELPESLIAHYPMPERSSCRLLSLDGPTGALTHGTFTDLLDKLNPGDLLVFNNTRVIPARLFGRKASGGKIEVLVERMLDDKRILAHIRASKAPKPGAELLLGDDERINATMTARHGALFEVEFNDQRSVLDILNSIGHMPLPPYIDRPDEDADRELYQTVYSEKPGAVAAPTAGLHFDEPLLEKLRAKGVEMAFVTLHVGAGTFQPVRVDTIEDHIMHSEYAEVPQDVVDAVLAAKARGNRVIAVGTTSVRSLESAAQAAKNDLIEPFFDDTQIFIYPGFQYKVVDALVTNFHLPESTLIMLVSAFAGYQHTMNAYKAAVEEKYRFFSYGDAMFITYNPQAINERVGE</sequence>
<accession>B7UJM8</accession>
<organism>
    <name type="scientific">Escherichia coli O127:H6 (strain E2348/69 / EPEC)</name>
    <dbReference type="NCBI Taxonomy" id="574521"/>
    <lineage>
        <taxon>Bacteria</taxon>
        <taxon>Pseudomonadati</taxon>
        <taxon>Pseudomonadota</taxon>
        <taxon>Gammaproteobacteria</taxon>
        <taxon>Enterobacterales</taxon>
        <taxon>Enterobacteriaceae</taxon>
        <taxon>Escherichia</taxon>
    </lineage>
</organism>
<feature type="chain" id="PRO_1000119151" description="S-adenosylmethionine:tRNA ribosyltransferase-isomerase">
    <location>
        <begin position="1"/>
        <end position="356"/>
    </location>
</feature>
<keyword id="KW-0963">Cytoplasm</keyword>
<keyword id="KW-0671">Queuosine biosynthesis</keyword>
<keyword id="KW-1185">Reference proteome</keyword>
<keyword id="KW-0949">S-adenosyl-L-methionine</keyword>
<keyword id="KW-0808">Transferase</keyword>
<reference key="1">
    <citation type="journal article" date="2009" name="J. Bacteriol.">
        <title>Complete genome sequence and comparative genome analysis of enteropathogenic Escherichia coli O127:H6 strain E2348/69.</title>
        <authorList>
            <person name="Iguchi A."/>
            <person name="Thomson N.R."/>
            <person name="Ogura Y."/>
            <person name="Saunders D."/>
            <person name="Ooka T."/>
            <person name="Henderson I.R."/>
            <person name="Harris D."/>
            <person name="Asadulghani M."/>
            <person name="Kurokawa K."/>
            <person name="Dean P."/>
            <person name="Kenny B."/>
            <person name="Quail M.A."/>
            <person name="Thurston S."/>
            <person name="Dougan G."/>
            <person name="Hayashi T."/>
            <person name="Parkhill J."/>
            <person name="Frankel G."/>
        </authorList>
    </citation>
    <scope>NUCLEOTIDE SEQUENCE [LARGE SCALE GENOMIC DNA]</scope>
    <source>
        <strain>E2348/69 / EPEC</strain>
    </source>
</reference>
<evidence type="ECO:0000255" key="1">
    <source>
        <dbReference type="HAMAP-Rule" id="MF_00113"/>
    </source>
</evidence>
<protein>
    <recommendedName>
        <fullName evidence="1">S-adenosylmethionine:tRNA ribosyltransferase-isomerase</fullName>
        <ecNumber evidence="1">2.4.99.17</ecNumber>
    </recommendedName>
    <alternativeName>
        <fullName evidence="1">Queuosine biosynthesis protein QueA</fullName>
    </alternativeName>
</protein>
<dbReference type="EC" id="2.4.99.17" evidence="1"/>
<dbReference type="EMBL" id="FM180568">
    <property type="protein sequence ID" value="CAS07888.1"/>
    <property type="molecule type" value="Genomic_DNA"/>
</dbReference>
<dbReference type="RefSeq" id="WP_001266485.1">
    <property type="nucleotide sequence ID" value="NC_011601.1"/>
</dbReference>
<dbReference type="SMR" id="B7UJM8"/>
<dbReference type="KEGG" id="ecg:E2348C_0340"/>
<dbReference type="HOGENOM" id="CLU_039110_1_0_6"/>
<dbReference type="UniPathway" id="UPA00392"/>
<dbReference type="Proteomes" id="UP000008205">
    <property type="component" value="Chromosome"/>
</dbReference>
<dbReference type="GO" id="GO:0005737">
    <property type="term" value="C:cytoplasm"/>
    <property type="evidence" value="ECO:0007669"/>
    <property type="project" value="UniProtKB-SubCell"/>
</dbReference>
<dbReference type="GO" id="GO:0051075">
    <property type="term" value="F:S-adenosylmethionine:tRNA ribosyltransferase-isomerase activity"/>
    <property type="evidence" value="ECO:0007669"/>
    <property type="project" value="UniProtKB-EC"/>
</dbReference>
<dbReference type="GO" id="GO:0008616">
    <property type="term" value="P:queuosine biosynthetic process"/>
    <property type="evidence" value="ECO:0007669"/>
    <property type="project" value="UniProtKB-UniRule"/>
</dbReference>
<dbReference type="GO" id="GO:0002099">
    <property type="term" value="P:tRNA wobble guanine modification"/>
    <property type="evidence" value="ECO:0007669"/>
    <property type="project" value="TreeGrafter"/>
</dbReference>
<dbReference type="FunFam" id="2.40.10.240:FF:000001">
    <property type="entry name" value="S-adenosylmethionine:tRNA ribosyltransferase-isomerase"/>
    <property type="match status" value="1"/>
</dbReference>
<dbReference type="FunFam" id="3.40.1780.10:FF:000001">
    <property type="entry name" value="S-adenosylmethionine:tRNA ribosyltransferase-isomerase"/>
    <property type="match status" value="1"/>
</dbReference>
<dbReference type="Gene3D" id="2.40.10.240">
    <property type="entry name" value="QueA-like"/>
    <property type="match status" value="1"/>
</dbReference>
<dbReference type="Gene3D" id="3.40.1780.10">
    <property type="entry name" value="QueA-like"/>
    <property type="match status" value="1"/>
</dbReference>
<dbReference type="HAMAP" id="MF_00113">
    <property type="entry name" value="QueA"/>
    <property type="match status" value="1"/>
</dbReference>
<dbReference type="InterPro" id="IPR003699">
    <property type="entry name" value="QueA"/>
</dbReference>
<dbReference type="InterPro" id="IPR042118">
    <property type="entry name" value="QueA_dom1"/>
</dbReference>
<dbReference type="InterPro" id="IPR042119">
    <property type="entry name" value="QueA_dom2"/>
</dbReference>
<dbReference type="InterPro" id="IPR036100">
    <property type="entry name" value="QueA_sf"/>
</dbReference>
<dbReference type="NCBIfam" id="NF001140">
    <property type="entry name" value="PRK00147.1"/>
    <property type="match status" value="1"/>
</dbReference>
<dbReference type="NCBIfam" id="TIGR00113">
    <property type="entry name" value="queA"/>
    <property type="match status" value="1"/>
</dbReference>
<dbReference type="PANTHER" id="PTHR30307">
    <property type="entry name" value="S-ADENOSYLMETHIONINE:TRNA RIBOSYLTRANSFERASE-ISOMERASE"/>
    <property type="match status" value="1"/>
</dbReference>
<dbReference type="PANTHER" id="PTHR30307:SF0">
    <property type="entry name" value="S-ADENOSYLMETHIONINE:TRNA RIBOSYLTRANSFERASE-ISOMERASE"/>
    <property type="match status" value="1"/>
</dbReference>
<dbReference type="Pfam" id="PF02547">
    <property type="entry name" value="Queuosine_synth"/>
    <property type="match status" value="1"/>
</dbReference>
<dbReference type="SUPFAM" id="SSF111337">
    <property type="entry name" value="QueA-like"/>
    <property type="match status" value="1"/>
</dbReference>